<organism>
    <name type="scientific">Trypanosoma brucei brucei</name>
    <dbReference type="NCBI Taxonomy" id="5702"/>
    <lineage>
        <taxon>Eukaryota</taxon>
        <taxon>Discoba</taxon>
        <taxon>Euglenozoa</taxon>
        <taxon>Kinetoplastea</taxon>
        <taxon>Metakinetoplastina</taxon>
        <taxon>Trypanosomatida</taxon>
        <taxon>Trypanosomatidae</taxon>
        <taxon>Trypanosoma</taxon>
    </lineage>
</organism>
<feature type="chain" id="PRO_0000128180" description="Alkyldihydroxyacetonephosphate synthase">
    <location>
        <begin position="1"/>
        <end position="613"/>
    </location>
</feature>
<feature type="domain" description="FAD-binding PCMH-type" evidence="3">
    <location>
        <begin position="126"/>
        <end position="307"/>
    </location>
</feature>
<feature type="region of interest" description="Important for enzyme activity" evidence="1">
    <location>
        <begin position="534"/>
        <end position="536"/>
    </location>
</feature>
<feature type="region of interest" description="Disordered" evidence="4">
    <location>
        <begin position="572"/>
        <end position="593"/>
    </location>
</feature>
<feature type="short sequence motif" description="Microbody targeting signal" evidence="2">
    <location>
        <begin position="611"/>
        <end position="613"/>
    </location>
</feature>
<feature type="active site" description="Proton donor/acceptor" evidence="1">
    <location>
        <position position="498"/>
    </location>
</feature>
<feature type="binding site" evidence="1">
    <location>
        <begin position="158"/>
        <end position="164"/>
    </location>
    <ligand>
        <name>FAD</name>
        <dbReference type="ChEBI" id="CHEBI:57692"/>
    </ligand>
</feature>
<feature type="binding site" evidence="1">
    <location>
        <begin position="228"/>
        <end position="234"/>
    </location>
    <ligand>
        <name>FAD</name>
        <dbReference type="ChEBI" id="CHEBI:57692"/>
    </ligand>
</feature>
<feature type="binding site" evidence="1">
    <location>
        <begin position="241"/>
        <end position="244"/>
    </location>
    <ligand>
        <name>FAD</name>
        <dbReference type="ChEBI" id="CHEBI:57692"/>
    </ligand>
</feature>
<feature type="binding site" evidence="1">
    <location>
        <begin position="291"/>
        <end position="297"/>
    </location>
    <ligand>
        <name>FAD</name>
        <dbReference type="ChEBI" id="CHEBI:57692"/>
    </ligand>
</feature>
<feature type="binding site" evidence="1">
    <location>
        <position position="437"/>
    </location>
    <ligand>
        <name>substrate</name>
    </ligand>
</feature>
<feature type="site" description="Important for enzyme activity" evidence="1">
    <location>
        <position position="342"/>
    </location>
</feature>
<protein>
    <recommendedName>
        <fullName>Alkyldihydroxyacetonephosphate synthase</fullName>
        <shortName>Alkyl-DHAP synthase</shortName>
        <ecNumber>2.5.1.26</ecNumber>
    </recommendedName>
    <alternativeName>
        <fullName>Alkylglycerone-phosphate synthase</fullName>
    </alternativeName>
</protein>
<reference key="1">
    <citation type="submission" date="1999-01" db="EMBL/GenBank/DDBJ databases">
        <title>Molecular characterization of Trypanosoma brucei alkyl-dihydroxyacetonephosphate synthase.</title>
        <authorList>
            <person name="Zomer A.M.W."/>
            <person name="Michels P.A.M."/>
            <person name="Opperdoes F.R."/>
        </authorList>
    </citation>
    <scope>NUCLEOTIDE SEQUENCE [GENOMIC DNA]</scope>
</reference>
<dbReference type="EC" id="2.5.1.26"/>
<dbReference type="EMBL" id="AF119091">
    <property type="protein sequence ID" value="AAD19697.1"/>
    <property type="molecule type" value="Genomic_DNA"/>
</dbReference>
<dbReference type="SMR" id="O97157"/>
<dbReference type="BRENDA" id="2.5.1.26">
    <property type="organism ID" value="6519"/>
</dbReference>
<dbReference type="UniPathway" id="UPA00781"/>
<dbReference type="GO" id="GO:0005777">
    <property type="term" value="C:peroxisome"/>
    <property type="evidence" value="ECO:0007669"/>
    <property type="project" value="UniProtKB-SubCell"/>
</dbReference>
<dbReference type="GO" id="GO:0008609">
    <property type="term" value="F:alkylglycerone-phosphate synthase activity"/>
    <property type="evidence" value="ECO:0000250"/>
    <property type="project" value="UniProtKB"/>
</dbReference>
<dbReference type="GO" id="GO:0071949">
    <property type="term" value="F:FAD binding"/>
    <property type="evidence" value="ECO:0000250"/>
    <property type="project" value="UniProtKB"/>
</dbReference>
<dbReference type="GO" id="GO:0008611">
    <property type="term" value="P:ether lipid biosynthetic process"/>
    <property type="evidence" value="ECO:0000250"/>
    <property type="project" value="UniProtKB"/>
</dbReference>
<dbReference type="FunFam" id="3.30.43.10:FF:000003">
    <property type="entry name" value="Alkylglycerone-phosphate synthase"/>
    <property type="match status" value="1"/>
</dbReference>
<dbReference type="FunFam" id="1.10.45.10:FF:000001">
    <property type="entry name" value="D-lactate dehydrogenase mitochondrial"/>
    <property type="match status" value="1"/>
</dbReference>
<dbReference type="Gene3D" id="3.30.300.330">
    <property type="match status" value="1"/>
</dbReference>
<dbReference type="Gene3D" id="3.30.465.10">
    <property type="match status" value="1"/>
</dbReference>
<dbReference type="Gene3D" id="3.30.70.3450">
    <property type="match status" value="1"/>
</dbReference>
<dbReference type="Gene3D" id="3.30.43.10">
    <property type="entry name" value="Uridine Diphospho-n-acetylenolpyruvylglucosamine Reductase, domain 2"/>
    <property type="match status" value="1"/>
</dbReference>
<dbReference type="Gene3D" id="1.10.45.10">
    <property type="entry name" value="Vanillyl-alcohol Oxidase, Chain A, domain 4"/>
    <property type="match status" value="1"/>
</dbReference>
<dbReference type="InterPro" id="IPR025650">
    <property type="entry name" value="Alkyl-DHAP_Synthase"/>
</dbReference>
<dbReference type="InterPro" id="IPR004113">
    <property type="entry name" value="FAD-bd_oxidored_4_C"/>
</dbReference>
<dbReference type="InterPro" id="IPR016166">
    <property type="entry name" value="FAD-bd_PCMH"/>
</dbReference>
<dbReference type="InterPro" id="IPR036318">
    <property type="entry name" value="FAD-bd_PCMH-like_sf"/>
</dbReference>
<dbReference type="InterPro" id="IPR016167">
    <property type="entry name" value="FAD-bd_PCMH_sub1"/>
</dbReference>
<dbReference type="InterPro" id="IPR016169">
    <property type="entry name" value="FAD-bd_PCMH_sub2"/>
</dbReference>
<dbReference type="InterPro" id="IPR016164">
    <property type="entry name" value="FAD-linked_Oxase-like_C"/>
</dbReference>
<dbReference type="InterPro" id="IPR006094">
    <property type="entry name" value="Oxid_FAD_bind_N"/>
</dbReference>
<dbReference type="InterPro" id="IPR016171">
    <property type="entry name" value="Vanillyl_alc_oxidase_C-sub2"/>
</dbReference>
<dbReference type="PANTHER" id="PTHR46568">
    <property type="entry name" value="ALKYLDIHYDROXYACETONEPHOSPHATE SYNTHASE, PEROXISOMAL"/>
    <property type="match status" value="1"/>
</dbReference>
<dbReference type="PANTHER" id="PTHR46568:SF1">
    <property type="entry name" value="ALKYLDIHYDROXYACETONEPHOSPHATE SYNTHASE, PEROXISOMAL"/>
    <property type="match status" value="1"/>
</dbReference>
<dbReference type="Pfam" id="PF02913">
    <property type="entry name" value="FAD-oxidase_C"/>
    <property type="match status" value="1"/>
</dbReference>
<dbReference type="Pfam" id="PF01565">
    <property type="entry name" value="FAD_binding_4"/>
    <property type="match status" value="1"/>
</dbReference>
<dbReference type="SUPFAM" id="SSF56176">
    <property type="entry name" value="FAD-binding/transporter-associated domain-like"/>
    <property type="match status" value="1"/>
</dbReference>
<dbReference type="SUPFAM" id="SSF55103">
    <property type="entry name" value="FAD-linked oxidases, C-terminal domain"/>
    <property type="match status" value="1"/>
</dbReference>
<dbReference type="PROSITE" id="PS51387">
    <property type="entry name" value="FAD_PCMH"/>
    <property type="match status" value="1"/>
</dbReference>
<accession>O97157</accession>
<keyword id="KW-0274">FAD</keyword>
<keyword id="KW-0285">Flavoprotein</keyword>
<keyword id="KW-0444">Lipid biosynthesis</keyword>
<keyword id="KW-0443">Lipid metabolism</keyword>
<keyword id="KW-0576">Peroxisome</keyword>
<keyword id="KW-0808">Transferase</keyword>
<proteinExistence type="inferred from homology"/>
<sequence>MDKRMITDAFEEIKWNGWGDTGVCIKYDEARQLPIHTNGKPMKHLLKFMKDDVLKVKGEFKIKPTPGLTKEEAIKRLPPPVVKQPFVDELRQVLSKDQIRLDAYARLTHIFGKNYRDLWRVRRGMIDRPPDAVILPNNHDDCVKIMELAQKHNVVVVPFGGGTNVTGGVEPNPFETRRMVISIDMRRMGRMLHIDTESGTAVFEVGVLGPDIDEQLSRYGFMMGHDPDSYAYSTLGGWIAARGSGAMSNKYGDIENMILAMRVVTPVGVVETPLTSRPCGVDLNAMFVGSEGAFGLVTEAVVKIERLPEVKRYEGWLFPSFEVAFTAFHTCTRKGIHPCTMRLYDEDDTRLSFAASTDSGLVSTFFSKCFKKYIATVKGWNLSKISLVVVGFEGTKAQTNCQRSELVGVFQAFGATCLGTKPGNTWQEKKYDLPYLRDFALAHNFWADVFETSVLYTDAIHCWRAVKKSFAEVMAENGKNAWIGCHTAHQYRFGCCLYFTFIGGQADENDLKIFLQVKKRAMEVMLQHRGNLTHHHGIGYEHVPWMKRYNGEGGLDAIMKFKKALDPKNICNPGKLLPSPPSEKETPKATQARQNREMMFDKMGIPGALQAHL</sequence>
<evidence type="ECO:0000250" key="1"/>
<evidence type="ECO:0000255" key="2"/>
<evidence type="ECO:0000255" key="3">
    <source>
        <dbReference type="PROSITE-ProRule" id="PRU00718"/>
    </source>
</evidence>
<evidence type="ECO:0000256" key="4">
    <source>
        <dbReference type="SAM" id="MobiDB-lite"/>
    </source>
</evidence>
<evidence type="ECO:0000305" key="5"/>
<name>ADAS_TRYBB</name>
<comment type="function">
    <text evidence="1">Catalyzes the exchange of an acyl for a long-chain alkyl group and the formation of the ether bond in the biosynthesis of ether phospholipids.</text>
</comment>
<comment type="catalytic activity">
    <reaction>
        <text>a long chain fatty alcohol + a 1-acylglycerone 3-phosphate = a 1-O-alkylglycerone 3-phosphate + a long-chain fatty acid + H(+)</text>
        <dbReference type="Rhea" id="RHEA:36171"/>
        <dbReference type="ChEBI" id="CHEBI:15378"/>
        <dbReference type="ChEBI" id="CHEBI:17135"/>
        <dbReference type="ChEBI" id="CHEBI:57534"/>
        <dbReference type="ChEBI" id="CHEBI:57560"/>
        <dbReference type="ChEBI" id="CHEBI:73315"/>
        <dbReference type="EC" id="2.5.1.26"/>
    </reaction>
</comment>
<comment type="cofactor">
    <cofactor evidence="1">
        <name>FAD</name>
        <dbReference type="ChEBI" id="CHEBI:57692"/>
    </cofactor>
</comment>
<comment type="pathway">
    <text>Glycerolipid metabolism; ether lipid biosynthesis.</text>
</comment>
<comment type="subunit">
    <text evidence="1">Homodimer.</text>
</comment>
<comment type="subcellular location">
    <subcellularLocation>
        <location evidence="1">Peroxisome</location>
    </subcellularLocation>
</comment>
<comment type="similarity">
    <text evidence="5">Belongs to the FAD-binding oxidoreductase/transferase type 4 family.</text>
</comment>